<proteinExistence type="inferred from homology"/>
<organism>
    <name type="scientific">Buchnera aphidicola subsp. Schizaphis graminum (strain Sg)</name>
    <dbReference type="NCBI Taxonomy" id="198804"/>
    <lineage>
        <taxon>Bacteria</taxon>
        <taxon>Pseudomonadati</taxon>
        <taxon>Pseudomonadota</taxon>
        <taxon>Gammaproteobacteria</taxon>
        <taxon>Enterobacterales</taxon>
        <taxon>Erwiniaceae</taxon>
        <taxon>Buchnera</taxon>
    </lineage>
</organism>
<name>BIPA_BUCAP</name>
<comment type="function">
    <text evidence="1">A 50S ribosomal subunit assembly protein with GTPase activity, required for 50S subunit assembly at low temperatures, may also play a role in translation. Binds GTP and analogs. Binds the 70S ribosome between the 30S and 50S subunits, in a similar position as ribosome-bound EF-G; it contacts a number of ribosomal proteins, both rRNAs and the A-site tRNA.</text>
</comment>
<comment type="catalytic activity">
    <reaction evidence="1">
        <text>GTP + H2O = GDP + phosphate + H(+)</text>
        <dbReference type="Rhea" id="RHEA:19669"/>
        <dbReference type="ChEBI" id="CHEBI:15377"/>
        <dbReference type="ChEBI" id="CHEBI:15378"/>
        <dbReference type="ChEBI" id="CHEBI:37565"/>
        <dbReference type="ChEBI" id="CHEBI:43474"/>
        <dbReference type="ChEBI" id="CHEBI:58189"/>
    </reaction>
</comment>
<comment type="subunit">
    <text evidence="1">Monomer.</text>
</comment>
<comment type="subcellular location">
    <subcellularLocation>
        <location evidence="1">Cytoplasm</location>
    </subcellularLocation>
    <text evidence="1">Binds to ribosomes.</text>
</comment>
<comment type="similarity">
    <text evidence="1">Belongs to the TRAFAC class translation factor GTPase superfamily. Classic translation factor GTPase family. BipA subfamily.</text>
</comment>
<evidence type="ECO:0000255" key="1">
    <source>
        <dbReference type="HAMAP-Rule" id="MF_00849"/>
    </source>
</evidence>
<evidence type="ECO:0000305" key="2"/>
<accession>Q8K9C8</accession>
<dbReference type="EC" id="3.6.5.-" evidence="1"/>
<dbReference type="EMBL" id="AE013218">
    <property type="protein sequence ID" value="AAM67963.1"/>
    <property type="molecule type" value="Genomic_DNA"/>
</dbReference>
<dbReference type="RefSeq" id="WP_011053930.1">
    <property type="nucleotide sequence ID" value="NC_004061.1"/>
</dbReference>
<dbReference type="SMR" id="Q8K9C8"/>
<dbReference type="STRING" id="198804.BUsg_418"/>
<dbReference type="GeneID" id="93003890"/>
<dbReference type="KEGG" id="bas:BUsg_418"/>
<dbReference type="eggNOG" id="COG1217">
    <property type="taxonomic scope" value="Bacteria"/>
</dbReference>
<dbReference type="HOGENOM" id="CLU_017016_4_0_6"/>
<dbReference type="Proteomes" id="UP000000416">
    <property type="component" value="Chromosome"/>
</dbReference>
<dbReference type="GO" id="GO:0005829">
    <property type="term" value="C:cytosol"/>
    <property type="evidence" value="ECO:0007669"/>
    <property type="project" value="TreeGrafter"/>
</dbReference>
<dbReference type="GO" id="GO:1990904">
    <property type="term" value="C:ribonucleoprotein complex"/>
    <property type="evidence" value="ECO:0007669"/>
    <property type="project" value="TreeGrafter"/>
</dbReference>
<dbReference type="GO" id="GO:0005525">
    <property type="term" value="F:GTP binding"/>
    <property type="evidence" value="ECO:0007669"/>
    <property type="project" value="UniProtKB-UniRule"/>
</dbReference>
<dbReference type="GO" id="GO:0003924">
    <property type="term" value="F:GTPase activity"/>
    <property type="evidence" value="ECO:0007669"/>
    <property type="project" value="UniProtKB-UniRule"/>
</dbReference>
<dbReference type="GO" id="GO:0097216">
    <property type="term" value="F:guanosine tetraphosphate binding"/>
    <property type="evidence" value="ECO:0007669"/>
    <property type="project" value="UniProtKB-ARBA"/>
</dbReference>
<dbReference type="GO" id="GO:0043022">
    <property type="term" value="F:ribosome binding"/>
    <property type="evidence" value="ECO:0007669"/>
    <property type="project" value="UniProtKB-UniRule"/>
</dbReference>
<dbReference type="GO" id="GO:0019843">
    <property type="term" value="F:rRNA binding"/>
    <property type="evidence" value="ECO:0007669"/>
    <property type="project" value="UniProtKB-KW"/>
</dbReference>
<dbReference type="GO" id="GO:0000049">
    <property type="term" value="F:tRNA binding"/>
    <property type="evidence" value="ECO:0007669"/>
    <property type="project" value="UniProtKB-KW"/>
</dbReference>
<dbReference type="GO" id="GO:0000027">
    <property type="term" value="P:ribosomal large subunit assembly"/>
    <property type="evidence" value="ECO:0007669"/>
    <property type="project" value="UniProtKB-UniRule"/>
</dbReference>
<dbReference type="CDD" id="cd16263">
    <property type="entry name" value="BipA_III"/>
    <property type="match status" value="1"/>
</dbReference>
<dbReference type="CDD" id="cd03710">
    <property type="entry name" value="BipA_TypA_C"/>
    <property type="match status" value="1"/>
</dbReference>
<dbReference type="CDD" id="cd03691">
    <property type="entry name" value="BipA_TypA_II"/>
    <property type="match status" value="1"/>
</dbReference>
<dbReference type="CDD" id="cd01891">
    <property type="entry name" value="TypA_BipA"/>
    <property type="match status" value="1"/>
</dbReference>
<dbReference type="FunFam" id="2.40.30.10:FF:000016">
    <property type="entry name" value="GTP-binding protein TypA"/>
    <property type="match status" value="1"/>
</dbReference>
<dbReference type="FunFam" id="2.40.50.250:FF:000001">
    <property type="entry name" value="GTP-binding protein TypA"/>
    <property type="match status" value="1"/>
</dbReference>
<dbReference type="FunFam" id="3.30.70.240:FF:000002">
    <property type="entry name" value="GTP-binding protein TypA"/>
    <property type="match status" value="1"/>
</dbReference>
<dbReference type="FunFam" id="3.30.70.870:FF:000003">
    <property type="entry name" value="GTP-binding protein TypA"/>
    <property type="match status" value="1"/>
</dbReference>
<dbReference type="FunFam" id="3.40.50.300:FF:000055">
    <property type="entry name" value="GTP-binding protein TypA"/>
    <property type="match status" value="1"/>
</dbReference>
<dbReference type="Gene3D" id="3.30.70.240">
    <property type="match status" value="1"/>
</dbReference>
<dbReference type="Gene3D" id="2.40.50.250">
    <property type="entry name" value="bipa protein"/>
    <property type="match status" value="1"/>
</dbReference>
<dbReference type="Gene3D" id="3.30.70.870">
    <property type="entry name" value="Elongation Factor G (Translational Gtpase), domain 3"/>
    <property type="match status" value="1"/>
</dbReference>
<dbReference type="Gene3D" id="3.40.50.300">
    <property type="entry name" value="P-loop containing nucleotide triphosphate hydrolases"/>
    <property type="match status" value="1"/>
</dbReference>
<dbReference type="Gene3D" id="2.40.30.10">
    <property type="entry name" value="Translation factors"/>
    <property type="match status" value="1"/>
</dbReference>
<dbReference type="HAMAP" id="MF_00849">
    <property type="entry name" value="BipA"/>
    <property type="match status" value="1"/>
</dbReference>
<dbReference type="InterPro" id="IPR006298">
    <property type="entry name" value="BipA"/>
</dbReference>
<dbReference type="InterPro" id="IPR048876">
    <property type="entry name" value="BipA_C"/>
</dbReference>
<dbReference type="InterPro" id="IPR047041">
    <property type="entry name" value="BipA_GTP-bd_dom"/>
</dbReference>
<dbReference type="InterPro" id="IPR047042">
    <property type="entry name" value="BipA_II"/>
</dbReference>
<dbReference type="InterPro" id="IPR047043">
    <property type="entry name" value="BipA_III"/>
</dbReference>
<dbReference type="InterPro" id="IPR035651">
    <property type="entry name" value="BipA_V"/>
</dbReference>
<dbReference type="InterPro" id="IPR035647">
    <property type="entry name" value="EFG_III/V"/>
</dbReference>
<dbReference type="InterPro" id="IPR000640">
    <property type="entry name" value="EFG_V-like"/>
</dbReference>
<dbReference type="InterPro" id="IPR004161">
    <property type="entry name" value="EFTu-like_2"/>
</dbReference>
<dbReference type="InterPro" id="IPR031157">
    <property type="entry name" value="G_TR_CS"/>
</dbReference>
<dbReference type="InterPro" id="IPR027417">
    <property type="entry name" value="P-loop_NTPase"/>
</dbReference>
<dbReference type="InterPro" id="IPR005225">
    <property type="entry name" value="Small_GTP-bd"/>
</dbReference>
<dbReference type="InterPro" id="IPR000795">
    <property type="entry name" value="T_Tr_GTP-bd_dom"/>
</dbReference>
<dbReference type="InterPro" id="IPR009000">
    <property type="entry name" value="Transl_B-barrel_sf"/>
</dbReference>
<dbReference type="InterPro" id="IPR042116">
    <property type="entry name" value="TypA/BipA_C"/>
</dbReference>
<dbReference type="NCBIfam" id="TIGR00231">
    <property type="entry name" value="small_GTP"/>
    <property type="match status" value="1"/>
</dbReference>
<dbReference type="NCBIfam" id="TIGR01394">
    <property type="entry name" value="TypA_BipA"/>
    <property type="match status" value="1"/>
</dbReference>
<dbReference type="PANTHER" id="PTHR42908:SF8">
    <property type="entry name" value="TR-TYPE G DOMAIN-CONTAINING PROTEIN"/>
    <property type="match status" value="1"/>
</dbReference>
<dbReference type="PANTHER" id="PTHR42908">
    <property type="entry name" value="TRANSLATION ELONGATION FACTOR-RELATED"/>
    <property type="match status" value="1"/>
</dbReference>
<dbReference type="Pfam" id="PF21018">
    <property type="entry name" value="BipA_C"/>
    <property type="match status" value="1"/>
</dbReference>
<dbReference type="Pfam" id="PF00679">
    <property type="entry name" value="EFG_C"/>
    <property type="match status" value="1"/>
</dbReference>
<dbReference type="Pfam" id="PF00009">
    <property type="entry name" value="GTP_EFTU"/>
    <property type="match status" value="1"/>
</dbReference>
<dbReference type="Pfam" id="PF03144">
    <property type="entry name" value="GTP_EFTU_D2"/>
    <property type="match status" value="1"/>
</dbReference>
<dbReference type="PRINTS" id="PR00315">
    <property type="entry name" value="ELONGATNFCT"/>
</dbReference>
<dbReference type="SUPFAM" id="SSF54980">
    <property type="entry name" value="EF-G C-terminal domain-like"/>
    <property type="match status" value="2"/>
</dbReference>
<dbReference type="SUPFAM" id="SSF52540">
    <property type="entry name" value="P-loop containing nucleoside triphosphate hydrolases"/>
    <property type="match status" value="1"/>
</dbReference>
<dbReference type="SUPFAM" id="SSF50447">
    <property type="entry name" value="Translation proteins"/>
    <property type="match status" value="1"/>
</dbReference>
<dbReference type="PROSITE" id="PS00301">
    <property type="entry name" value="G_TR_1"/>
    <property type="match status" value="1"/>
</dbReference>
<dbReference type="PROSITE" id="PS51722">
    <property type="entry name" value="G_TR_2"/>
    <property type="match status" value="1"/>
</dbReference>
<keyword id="KW-0963">Cytoplasm</keyword>
<keyword id="KW-0342">GTP-binding</keyword>
<keyword id="KW-0378">Hydrolase</keyword>
<keyword id="KW-0547">Nucleotide-binding</keyword>
<keyword id="KW-0690">Ribosome biogenesis</keyword>
<keyword id="KW-0694">RNA-binding</keyword>
<keyword id="KW-0699">rRNA-binding</keyword>
<keyword id="KW-0820">tRNA-binding</keyword>
<reference key="1">
    <citation type="journal article" date="2002" name="Science">
        <title>50 million years of genomic stasis in endosymbiotic bacteria.</title>
        <authorList>
            <person name="Tamas I."/>
            <person name="Klasson L."/>
            <person name="Canbaeck B."/>
            <person name="Naeslund A.K."/>
            <person name="Eriksson A.-S."/>
            <person name="Wernegreen J.J."/>
            <person name="Sandstroem J.P."/>
            <person name="Moran N.A."/>
            <person name="Andersson S.G.E."/>
        </authorList>
    </citation>
    <scope>NUCLEOTIDE SEQUENCE [LARGE SCALE GENOMIC DNA]</scope>
    <source>
        <strain>Sg</strain>
    </source>
</reference>
<gene>
    <name evidence="1" type="primary">bipA</name>
    <name type="ordered locus">BUsg_418</name>
</gene>
<protein>
    <recommendedName>
        <fullName evidence="1">Large ribosomal subunit assembly factor BipA</fullName>
        <ecNumber evidence="1">3.6.5.-</ecNumber>
    </recommendedName>
    <alternativeName>
        <fullName evidence="2">50S ribosomal subunit assembly factor BipA</fullName>
    </alternativeName>
    <alternativeName>
        <fullName evidence="1">GTP-binding protein BipA</fullName>
    </alternativeName>
</protein>
<sequence length="609" mass="69247">MHQNIRNIAIIAHVDHGKTTLLDQLLQQSGTFQKHEEKKERIMDSNDLEKERGITILSKNTSIKWKEYKINIVDTPGHADFGGEVERVMSMVDSVLLIVDALDGPMPQTRFVTKKAFKYGLNPIVVINKIDRKNSRPDWVINEIFDLFVNLNANDKQLDFPIIYTSAILGTSGINYLDMKENMIPLYEAIIKYAPAPNVDPNQKFQMQISQLDYNNYLGVIGVGRIKQGHIKPNDSVVIIDSLGNTRNGKINKVLNYFGLKRLEIQKGDAGDIIAITGLNKLNISDTICHPDNLCPLPPLIIDEPTVNMFFSVNTSPFSGKEGKYITSRQILERLKKETIHNVALQVKETKDANIFSVSGRGELHLSILIENMRREGFELEVSRPKIIFREINDIKQEPFENIILDIEEKHQGNIMKFIGERKGELKNITVDPNKRIRLEYLLSSRALIGFRTEFMSITSGTGLFYSSFSHYQKYQKNDIGQRKNGVLISNSTGMAVAFALFNLQERGKLFLGHGTQVYEGQIIGLHNRSNDLTVNCLTGKKLTNMRASGTDEAIILTTFTKFTLEEALSFINDDELVEITPKSIRLRKRYLKENERKKANRDRTTIVD</sequence>
<feature type="chain" id="PRO_0000091548" description="Large ribosomal subunit assembly factor BipA">
    <location>
        <begin position="1"/>
        <end position="609"/>
    </location>
</feature>
<feature type="domain" description="tr-type G" evidence="1">
    <location>
        <begin position="3"/>
        <end position="198"/>
    </location>
</feature>
<feature type="binding site" evidence="1">
    <location>
        <begin position="15"/>
        <end position="20"/>
    </location>
    <ligand>
        <name>GTP</name>
        <dbReference type="ChEBI" id="CHEBI:37565"/>
    </ligand>
</feature>
<feature type="binding site" evidence="1">
    <location>
        <begin position="128"/>
        <end position="131"/>
    </location>
    <ligand>
        <name>GTP</name>
        <dbReference type="ChEBI" id="CHEBI:37565"/>
    </ligand>
</feature>